<accession>Q9KA57</accession>
<reference key="1">
    <citation type="journal article" date="2000" name="Nucleic Acids Res.">
        <title>Complete genome sequence of the alkaliphilic bacterium Bacillus halodurans and genomic sequence comparison with Bacillus subtilis.</title>
        <authorList>
            <person name="Takami H."/>
            <person name="Nakasone K."/>
            <person name="Takaki Y."/>
            <person name="Maeno G."/>
            <person name="Sasaki R."/>
            <person name="Masui N."/>
            <person name="Fuji F."/>
            <person name="Hirama C."/>
            <person name="Nakamura Y."/>
            <person name="Ogasawara N."/>
            <person name="Kuhara S."/>
            <person name="Horikoshi K."/>
        </authorList>
    </citation>
    <scope>NUCLEOTIDE SEQUENCE [LARGE SCALE GENOMIC DNA]</scope>
    <source>
        <strain>ATCC BAA-125 / DSM 18197 / FERM 7344 / JCM 9153 / C-125</strain>
    </source>
</reference>
<comment type="function">
    <text evidence="1">Deamidates glutamine residues to glutamate on methyl-accepting chemotaxis receptors (MCPs). CheD-mediated MCP deamidation is required for productive communication of the conformational signals of the chemoreceptors to the CheA kinase (By similarity).</text>
</comment>
<comment type="catalytic activity">
    <reaction evidence="2">
        <text>L-glutaminyl-[protein] + H2O = L-glutamyl-[protein] + NH4(+)</text>
        <dbReference type="Rhea" id="RHEA:16441"/>
        <dbReference type="Rhea" id="RHEA-COMP:10207"/>
        <dbReference type="Rhea" id="RHEA-COMP:10208"/>
        <dbReference type="ChEBI" id="CHEBI:15377"/>
        <dbReference type="ChEBI" id="CHEBI:28938"/>
        <dbReference type="ChEBI" id="CHEBI:29973"/>
        <dbReference type="ChEBI" id="CHEBI:30011"/>
        <dbReference type="EC" id="3.5.1.44"/>
    </reaction>
</comment>
<comment type="subunit">
    <text evidence="2">Forms a complex with CheC.</text>
</comment>
<comment type="similarity">
    <text evidence="2">Belongs to the CheD family.</text>
</comment>
<sequence length="162" mass="17629">MNDVVKVGMADLNVVTPPHTIRTAGLGSCVGVVLYDDVKKVAGMAHIMLPDSALGKKQEFNRAKYADTALDLLLSKLEAIGAKRYSLKAKMAGGAQMFSFASNNDMMRIGQRNVEAVKKKLRELSIPILAEDVGGSNGRTIEFNPETKRLSIRTVHQGEKEI</sequence>
<proteinExistence type="inferred from homology"/>
<protein>
    <recommendedName>
        <fullName evidence="2">Chemoreceptor glutamine deamidase CheD</fullName>
        <ecNumber evidence="2">3.5.1.44</ecNumber>
    </recommendedName>
</protein>
<gene>
    <name evidence="2" type="primary">cheD</name>
    <name type="ordered locus">BH2433</name>
</gene>
<evidence type="ECO:0000250" key="1"/>
<evidence type="ECO:0000255" key="2">
    <source>
        <dbReference type="HAMAP-Rule" id="MF_01440"/>
    </source>
</evidence>
<name>CHED_HALH5</name>
<dbReference type="EC" id="3.5.1.44" evidence="2"/>
<dbReference type="EMBL" id="BA000004">
    <property type="protein sequence ID" value="BAB06152.1"/>
    <property type="molecule type" value="Genomic_DNA"/>
</dbReference>
<dbReference type="PIR" id="A83954">
    <property type="entry name" value="A83954"/>
</dbReference>
<dbReference type="RefSeq" id="WP_010898586.1">
    <property type="nucleotide sequence ID" value="NC_002570.2"/>
</dbReference>
<dbReference type="SMR" id="Q9KA57"/>
<dbReference type="STRING" id="272558.gene:10728331"/>
<dbReference type="KEGG" id="bha:BH2433"/>
<dbReference type="eggNOG" id="COG1871">
    <property type="taxonomic scope" value="Bacteria"/>
</dbReference>
<dbReference type="HOGENOM" id="CLU_087854_2_0_9"/>
<dbReference type="OrthoDB" id="9807202at2"/>
<dbReference type="Proteomes" id="UP000001258">
    <property type="component" value="Chromosome"/>
</dbReference>
<dbReference type="GO" id="GO:0050568">
    <property type="term" value="F:protein-glutamine glutaminase activity"/>
    <property type="evidence" value="ECO:0007669"/>
    <property type="project" value="UniProtKB-UniRule"/>
</dbReference>
<dbReference type="GO" id="GO:0006935">
    <property type="term" value="P:chemotaxis"/>
    <property type="evidence" value="ECO:0007669"/>
    <property type="project" value="UniProtKB-UniRule"/>
</dbReference>
<dbReference type="CDD" id="cd16352">
    <property type="entry name" value="CheD"/>
    <property type="match status" value="1"/>
</dbReference>
<dbReference type="Gene3D" id="3.30.1330.200">
    <property type="match status" value="1"/>
</dbReference>
<dbReference type="HAMAP" id="MF_01440">
    <property type="entry name" value="CheD"/>
    <property type="match status" value="1"/>
</dbReference>
<dbReference type="InterPro" id="IPR038592">
    <property type="entry name" value="CheD-like_sf"/>
</dbReference>
<dbReference type="InterPro" id="IPR005659">
    <property type="entry name" value="Chemorcpt_Glu_NH3ase_CheD"/>
</dbReference>
<dbReference type="InterPro" id="IPR011324">
    <property type="entry name" value="Cytotoxic_necrot_fac-like_cat"/>
</dbReference>
<dbReference type="PANTHER" id="PTHR35147">
    <property type="entry name" value="CHEMORECEPTOR GLUTAMINE DEAMIDASE CHED-RELATED"/>
    <property type="match status" value="1"/>
</dbReference>
<dbReference type="PANTHER" id="PTHR35147:SF1">
    <property type="entry name" value="CHEMORECEPTOR GLUTAMINE DEAMIDASE CHED-RELATED"/>
    <property type="match status" value="1"/>
</dbReference>
<dbReference type="Pfam" id="PF03975">
    <property type="entry name" value="CheD"/>
    <property type="match status" value="1"/>
</dbReference>
<dbReference type="SUPFAM" id="SSF64438">
    <property type="entry name" value="CNF1/YfiH-like putative cysteine hydrolases"/>
    <property type="match status" value="1"/>
</dbReference>
<feature type="chain" id="PRO_0000251003" description="Chemoreceptor glutamine deamidase CheD">
    <location>
        <begin position="1"/>
        <end position="162"/>
    </location>
</feature>
<keyword id="KW-0145">Chemotaxis</keyword>
<keyword id="KW-0378">Hydrolase</keyword>
<keyword id="KW-1185">Reference proteome</keyword>
<organism>
    <name type="scientific">Halalkalibacterium halodurans (strain ATCC BAA-125 / DSM 18197 / FERM 7344 / JCM 9153 / C-125)</name>
    <name type="common">Bacillus halodurans</name>
    <dbReference type="NCBI Taxonomy" id="272558"/>
    <lineage>
        <taxon>Bacteria</taxon>
        <taxon>Bacillati</taxon>
        <taxon>Bacillota</taxon>
        <taxon>Bacilli</taxon>
        <taxon>Bacillales</taxon>
        <taxon>Bacillaceae</taxon>
        <taxon>Halalkalibacterium (ex Joshi et al. 2022)</taxon>
    </lineage>
</organism>